<protein>
    <recommendedName>
        <fullName evidence="5">Glucosylceramidase</fullName>
        <ecNumber evidence="4">3.2.1.45</ecNumber>
    </recommendedName>
    <alternativeName>
        <fullName evidence="5">Endoglycoceramidase-related protein 1</fullName>
        <shortName evidence="5">EGCrP1</shortName>
    </alternativeName>
    <alternativeName>
        <fullName evidence="5">Glucocerebrosidase</fullName>
    </alternativeName>
</protein>
<evidence type="ECO:0000250" key="1">
    <source>
        <dbReference type="UniProtKB" id="O85465"/>
    </source>
</evidence>
<evidence type="ECO:0000255" key="2"/>
<evidence type="ECO:0000255" key="3">
    <source>
        <dbReference type="PROSITE-ProRule" id="PRU00498"/>
    </source>
</evidence>
<evidence type="ECO:0000269" key="4">
    <source>
    </source>
</evidence>
<evidence type="ECO:0000303" key="5">
    <source>
    </source>
</evidence>
<evidence type="ECO:0000305" key="6"/>
<evidence type="ECO:0000312" key="7">
    <source>
        <dbReference type="EMBL" id="AFR92751.2"/>
    </source>
</evidence>
<evidence type="ECO:0000312" key="8">
    <source>
        <dbReference type="EMBL" id="BAL46040.1"/>
    </source>
</evidence>
<evidence type="ECO:0000312" key="9">
    <source>
        <dbReference type="Proteomes" id="UP000010091"/>
    </source>
</evidence>
<accession>H1AE12</accession>
<accession>J9VH96</accession>
<gene>
    <name evidence="5" type="primary">EGC1</name>
    <name evidence="7" type="ORF">CNAG_00623</name>
</gene>
<dbReference type="EC" id="3.2.1.45" evidence="4"/>
<dbReference type="EMBL" id="AB669191">
    <property type="protein sequence ID" value="BAL46040.1"/>
    <property type="molecule type" value="mRNA"/>
</dbReference>
<dbReference type="EMBL" id="CP003820">
    <property type="protein sequence ID" value="AFR92751.2"/>
    <property type="status" value="ALT_INIT"/>
    <property type="molecule type" value="Genomic_DNA"/>
</dbReference>
<dbReference type="RefSeq" id="XP_012046368.1">
    <property type="nucleotide sequence ID" value="XM_012190978.1"/>
</dbReference>
<dbReference type="SMR" id="H1AE12"/>
<dbReference type="GlyCosmos" id="H1AE12">
    <property type="glycosylation" value="6 sites, No reported glycans"/>
</dbReference>
<dbReference type="GeneID" id="23884409"/>
<dbReference type="KEGG" id="cng:CNAG_00623"/>
<dbReference type="VEuPathDB" id="FungiDB:CNAG_00623"/>
<dbReference type="HOGENOM" id="CLU_009024_1_0_1"/>
<dbReference type="OrthoDB" id="531at5206"/>
<dbReference type="BRENDA" id="3.2.1.62">
    <property type="organism ID" value="1723"/>
</dbReference>
<dbReference type="Proteomes" id="UP000010091">
    <property type="component" value="Chromosome 1"/>
</dbReference>
<dbReference type="GO" id="GO:0016020">
    <property type="term" value="C:membrane"/>
    <property type="evidence" value="ECO:0007669"/>
    <property type="project" value="UniProtKB-SubCell"/>
</dbReference>
<dbReference type="GO" id="GO:0004348">
    <property type="term" value="F:glucosylceramidase activity"/>
    <property type="evidence" value="ECO:0000314"/>
    <property type="project" value="UniProtKB"/>
</dbReference>
<dbReference type="GO" id="GO:0050295">
    <property type="term" value="F:steryl-beta-glucosidase activity"/>
    <property type="evidence" value="ECO:0007669"/>
    <property type="project" value="TreeGrafter"/>
</dbReference>
<dbReference type="GO" id="GO:1904462">
    <property type="term" value="P:ergosteryl 3-beta-D-glucoside catabolic process"/>
    <property type="evidence" value="ECO:0007669"/>
    <property type="project" value="TreeGrafter"/>
</dbReference>
<dbReference type="GO" id="GO:0006680">
    <property type="term" value="P:glucosylceramide catabolic process"/>
    <property type="evidence" value="ECO:0000314"/>
    <property type="project" value="UniProtKB"/>
</dbReference>
<dbReference type="GO" id="GO:0043094">
    <property type="term" value="P:metabolic compound salvage"/>
    <property type="evidence" value="ECO:0000315"/>
    <property type="project" value="UniProtKB"/>
</dbReference>
<dbReference type="Gene3D" id="3.20.20.80">
    <property type="entry name" value="Glycosidases"/>
    <property type="match status" value="2"/>
</dbReference>
<dbReference type="Gene3D" id="2.60.40.1180">
    <property type="entry name" value="Golgi alpha-mannosidase II"/>
    <property type="match status" value="1"/>
</dbReference>
<dbReference type="InterPro" id="IPR041036">
    <property type="entry name" value="GH5_C"/>
</dbReference>
<dbReference type="InterPro" id="IPR013780">
    <property type="entry name" value="Glyco_hydro_b"/>
</dbReference>
<dbReference type="InterPro" id="IPR017853">
    <property type="entry name" value="Glycoside_hydrolase_SF"/>
</dbReference>
<dbReference type="InterPro" id="IPR052066">
    <property type="entry name" value="Glycosphingolipid_Hydrolases"/>
</dbReference>
<dbReference type="PANTHER" id="PTHR31308">
    <property type="match status" value="1"/>
</dbReference>
<dbReference type="PANTHER" id="PTHR31308:SF5">
    <property type="entry name" value="ERGOSTERYL-BETA-GLUCOSIDASE"/>
    <property type="match status" value="1"/>
</dbReference>
<dbReference type="Pfam" id="PF18564">
    <property type="entry name" value="Glyco_hydro_5_C"/>
    <property type="match status" value="1"/>
</dbReference>
<dbReference type="SUPFAM" id="SSF51445">
    <property type="entry name" value="(Trans)glycosidases"/>
    <property type="match status" value="1"/>
</dbReference>
<name>EGCR1_CRYNH</name>
<comment type="function">
    <text evidence="4">Specifically hydrolyzes the glucosidic linkage in glucosylceramide (PubMed:22072709). May prevent accumulation of aberrent glucosylceramide containing immature ceramide (PubMed:22072709).</text>
</comment>
<comment type="catalytic activity">
    <reaction evidence="4">
        <text>a beta-D-glucosyl-(1&lt;-&gt;1')-N-acylsphing-4-enine + H2O = an N-acylsphing-4-enine + D-glucose</text>
        <dbReference type="Rhea" id="RHEA:13269"/>
        <dbReference type="ChEBI" id="CHEBI:4167"/>
        <dbReference type="ChEBI" id="CHEBI:15377"/>
        <dbReference type="ChEBI" id="CHEBI:22801"/>
        <dbReference type="ChEBI" id="CHEBI:52639"/>
        <dbReference type="EC" id="3.2.1.45"/>
    </reaction>
    <physiologicalReaction direction="left-to-right" evidence="4">
        <dbReference type="Rhea" id="RHEA:13270"/>
    </physiologicalReaction>
</comment>
<comment type="biophysicochemical properties">
    <phDependence>
        <text evidence="4">Optimum pH is 7.</text>
    </phDependence>
</comment>
<comment type="subcellular location">
    <subcellularLocation>
        <location evidence="4">Membrane</location>
        <topology evidence="2">Single-pass membrane protein</topology>
    </subcellularLocation>
</comment>
<comment type="disruption phenotype">
    <text evidence="4">Decreases membrane glucosylceramidase activity at neutral pH (PubMed:22072709). Increases cellular glucosylceramide levels; levels of normal glucosylceramide containing mature ceramide and abnormal glucosylceramide containing immature ceramide are both increased (PubMed:22072709). Decreases capsule size during growth in capsule-inducing conditions (PubMed:22072709).</text>
</comment>
<comment type="similarity">
    <text evidence="6">Belongs to the glycosyl hydrolase 5 (cellulase A) family.</text>
</comment>
<comment type="sequence caution" evidence="6">
    <conflict type="erroneous initiation">
        <sequence resource="EMBL-CDS" id="AFR92751"/>
    </conflict>
    <text>Extended N-terminus.</text>
</comment>
<reference evidence="8" key="1">
    <citation type="journal article" date="2012" name="J. Biol. Chem.">
        <title>Quality control of fungus-specific glucosylceramide in Cryptococcus neoformans by endoglycoceramidase-related protein 1 (EGCrP1).</title>
        <authorList>
            <person name="Ishibashi Y."/>
            <person name="Ikeda K."/>
            <person name="Sakaguchi K."/>
            <person name="Okino N."/>
            <person name="Taguchi R."/>
            <person name="Ito M."/>
        </authorList>
    </citation>
    <scope>NUCLEOTIDE SEQUENCE [MRNA]</scope>
    <scope>FUNCTION</scope>
    <scope>CATALYTIC ACTIVITY</scope>
    <scope>BIOPHYSICOCHEMICAL PROPERTIES</scope>
    <scope>SUBCELLULAR LOCATION</scope>
    <scope>DISRUPTION PHENOTYPE</scope>
    <source>
        <strain evidence="8">H99 / ATCC 208821 / CBS 10515 / FGSC 9487</strain>
    </source>
</reference>
<reference evidence="9" key="2">
    <citation type="journal article" date="2014" name="PLoS Genet.">
        <title>Analysis of the genome and transcriptome of Cryptococcus neoformans var. grubii reveals complex RNA expression and microevolution leading to virulence attenuation.</title>
        <authorList>
            <person name="Janbon G."/>
            <person name="Ormerod K.L."/>
            <person name="Paulet D."/>
            <person name="Byrnes E.J. III"/>
            <person name="Yadav V."/>
            <person name="Chatterjee G."/>
            <person name="Mullapudi N."/>
            <person name="Hon C.-C."/>
            <person name="Billmyre R.B."/>
            <person name="Brunel F."/>
            <person name="Bahn Y.-S."/>
            <person name="Chen W."/>
            <person name="Chen Y."/>
            <person name="Chow E.W.L."/>
            <person name="Coppee J.-Y."/>
            <person name="Floyd-Averette A."/>
            <person name="Gaillardin C."/>
            <person name="Gerik K.J."/>
            <person name="Goldberg J."/>
            <person name="Gonzalez-Hilarion S."/>
            <person name="Gujja S."/>
            <person name="Hamlin J.L."/>
            <person name="Hsueh Y.-P."/>
            <person name="Ianiri G."/>
            <person name="Jones S."/>
            <person name="Kodira C.D."/>
            <person name="Kozubowski L."/>
            <person name="Lam W."/>
            <person name="Marra M."/>
            <person name="Mesner L.D."/>
            <person name="Mieczkowski P.A."/>
            <person name="Moyrand F."/>
            <person name="Nielsen K."/>
            <person name="Proux C."/>
            <person name="Rossignol T."/>
            <person name="Schein J.E."/>
            <person name="Sun S."/>
            <person name="Wollschlaeger C."/>
            <person name="Wood I.A."/>
            <person name="Zeng Q."/>
            <person name="Neuveglise C."/>
            <person name="Newlon C.S."/>
            <person name="Perfect J.R."/>
            <person name="Lodge J.K."/>
            <person name="Idnurm A."/>
            <person name="Stajich J.E."/>
            <person name="Kronstad J.W."/>
            <person name="Sanyal K."/>
            <person name="Heitman J."/>
            <person name="Fraser J.A."/>
            <person name="Cuomo C.A."/>
            <person name="Dietrich F.S."/>
        </authorList>
    </citation>
    <scope>NUCLEOTIDE SEQUENCE [LARGE SCALE GENOMIC DNA]</scope>
    <source>
        <strain>H99 / ATCC 208821 / CBS 10515 / FGSC 9487</strain>
    </source>
</reference>
<proteinExistence type="evidence at protein level"/>
<organism evidence="9">
    <name type="scientific">Cryptococcus neoformans var. grubii serotype A (strain H99 / ATCC 208821 / CBS 10515 / FGSC 9487)</name>
    <name type="common">Filobasidiella neoformans var. grubii</name>
    <dbReference type="NCBI Taxonomy" id="235443"/>
    <lineage>
        <taxon>Eukaryota</taxon>
        <taxon>Fungi</taxon>
        <taxon>Dikarya</taxon>
        <taxon>Basidiomycota</taxon>
        <taxon>Agaricomycotina</taxon>
        <taxon>Tremellomycetes</taxon>
        <taxon>Tremellales</taxon>
        <taxon>Cryptococcaceae</taxon>
        <taxon>Cryptococcus</taxon>
        <taxon>Cryptococcus neoformans species complex</taxon>
    </lineage>
</organism>
<sequence>MSGIQFDVSRLCAATISIQGRHFVDSHGRVLHLRGANVSAASKVPATPAPKIHDHAQASYVGRPFRLEEADEHWARLKSWGLTFVRITVTWEALEHKERGVYDEDYLAYLRALLQSMEPYGLVAYIALHQDVWSRYCGGSGAPGWTLEAAGFDLSNEGENLSLSGAAFLDGIKSGRLAGERGLWPTGYQKLAAATMNTLFWGGETFAPLLKVPGQIDGKWVSRNIQVYLQEAFLAATAKLVKAVGDLETVMGFELMNEPHPGFIGIQSIHEWDYTTDLHLGQFPSPLQSFSMGAGHPTPNVPVYTRSFPFPTRVTSHVTANPEGACAWASKECPWEKHGVWRWSEAKQEAAALQQDYFVKNRDGGKVDFYEDFYFPFVRKWEQVIGENISSTKGLKARMVEAIPNELCPEWKEESRPKNMVYAPHWYDLNTLFKKKFGFMSVNVQGLARGMFILRALYFGTAAAKANYALQIKTIVLAARLKLGPVPVIFGECGVPMDINNEEAFRTGDWKWQERSMDALISAMEGALMGFNLWTYNPANRDDIGDDWNAENFSWYSESNRTKLLKNAEKSSDGLDVGARLLNVIVRPYPIATAGNPTSLAYDANACAFTYRFRSPLRVSAAAPTPEEYTEIFLPRRVFRKESTEWTVTAGGKVHVDWERERVFVWFEDSSLTAASIKDDTRPRRIDIWVIGRKVEENWSIAQILVAVVILLLGVLVAYYAQLYEWEKDKMIFQHLREANGM</sequence>
<feature type="chain" id="PRO_0000451755" description="Glucosylceramidase">
    <location>
        <begin position="1"/>
        <end position="742"/>
    </location>
</feature>
<feature type="transmembrane region" description="Helical" evidence="2">
    <location>
        <begin position="701"/>
        <end position="721"/>
    </location>
</feature>
<feature type="active site" description="Proton donor" evidence="1">
    <location>
        <position position="258"/>
    </location>
</feature>
<feature type="active site" description="Nucleophile" evidence="1">
    <location>
        <position position="492"/>
    </location>
</feature>
<feature type="glycosylation site" description="N-linked (GlcNAc...) asparagine" evidence="3">
    <location>
        <position position="37"/>
    </location>
</feature>
<feature type="glycosylation site" description="N-linked (GlcNAc...) asparagine" evidence="3">
    <location>
        <position position="160"/>
    </location>
</feature>
<feature type="glycosylation site" description="N-linked (GlcNAc...) asparagine" evidence="3">
    <location>
        <position position="388"/>
    </location>
</feature>
<feature type="glycosylation site" description="N-linked (GlcNAc...) asparagine" evidence="3">
    <location>
        <position position="552"/>
    </location>
</feature>
<feature type="glycosylation site" description="N-linked (GlcNAc...) asparagine" evidence="3">
    <location>
        <position position="560"/>
    </location>
</feature>
<feature type="glycosylation site" description="N-linked (GlcNAc...) asparagine" evidence="3">
    <location>
        <position position="698"/>
    </location>
</feature>
<keyword id="KW-0325">Glycoprotein</keyword>
<keyword id="KW-0326">Glycosidase</keyword>
<keyword id="KW-0378">Hydrolase</keyword>
<keyword id="KW-0472">Membrane</keyword>
<keyword id="KW-0812">Transmembrane</keyword>
<keyword id="KW-1133">Transmembrane helix</keyword>